<evidence type="ECO:0000255" key="1"/>
<evidence type="ECO:0000269" key="2">
    <source>
    </source>
</evidence>
<evidence type="ECO:0000269" key="3">
    <source>
    </source>
</evidence>
<evidence type="ECO:0000305" key="4"/>
<organism>
    <name type="scientific">Arabidopsis thaliana</name>
    <name type="common">Mouse-ear cress</name>
    <dbReference type="NCBI Taxonomy" id="3702"/>
    <lineage>
        <taxon>Eukaryota</taxon>
        <taxon>Viridiplantae</taxon>
        <taxon>Streptophyta</taxon>
        <taxon>Embryophyta</taxon>
        <taxon>Tracheophyta</taxon>
        <taxon>Spermatophyta</taxon>
        <taxon>Magnoliopsida</taxon>
        <taxon>eudicotyledons</taxon>
        <taxon>Gunneridae</taxon>
        <taxon>Pentapetalae</taxon>
        <taxon>rosids</taxon>
        <taxon>malvids</taxon>
        <taxon>Brassicales</taxon>
        <taxon>Brassicaceae</taxon>
        <taxon>Camelineae</taxon>
        <taxon>Arabidopsis</taxon>
    </lineage>
</organism>
<gene>
    <name type="ordered locus">At1g78140</name>
    <name type="ORF">T11I11.8</name>
</gene>
<proteinExistence type="evidence at protein level"/>
<sequence>MPMTVVSGRFSTALLPTCFSLSRLHSVKYAAQRRVVFVSRSAHASSASVSVETNSNSNVDFVIEKKDKNRGEKKILACPICYNSLAWISQPNGLIESAASGIQVQCNTCKRSYSGNETHLDLAVASGSKRYSEPMPLSTELFRTPLVSFLYERGWRQNFIWGGFPGPEKEFEMAKAYLKPVLGGNIIDASCGSGMFSRLFTRSDLFSLVIALDYSENMLRQCYELLNKEENFPNKEKLVLVRADIARLPFLSGSVDAVHAGAALHCWPSPSSAVAEISRVLRPGGVFVATTFIYDGPFSFIPFLKNLRQEIMRYSGSHIFLNERELEDICKACGLVNFTRVRNGPFIMLSATKPS</sequence>
<feature type="transit peptide" description="Chloroplast" evidence="1">
    <location>
        <begin position="1"/>
        <end position="49"/>
    </location>
</feature>
<feature type="chain" id="PRO_0000286521" description="Uncharacterized methyltransferase At1g78140, chloroplastic">
    <location>
        <begin position="50"/>
        <end position="355"/>
    </location>
</feature>
<comment type="subcellular location">
    <subcellularLocation>
        <location evidence="2 3">Plastid</location>
        <location evidence="2 3">Chloroplast</location>
        <location evidence="2 3">Plastoglobule</location>
    </subcellularLocation>
</comment>
<comment type="similarity">
    <text evidence="4">Belongs to the methyltransferase superfamily.</text>
</comment>
<comment type="sequence caution" evidence="4">
    <conflict type="erroneous gene model prediction">
        <sequence resource="EMBL-CDS" id="AAG52104"/>
    </conflict>
</comment>
<protein>
    <recommendedName>
        <fullName>Uncharacterized methyltransferase At1g78140, chloroplastic</fullName>
        <ecNumber>2.1.1.-</ecNumber>
    </recommendedName>
</protein>
<reference key="1">
    <citation type="journal article" date="2000" name="Nature">
        <title>Sequence and analysis of chromosome 1 of the plant Arabidopsis thaliana.</title>
        <authorList>
            <person name="Theologis A."/>
            <person name="Ecker J.R."/>
            <person name="Palm C.J."/>
            <person name="Federspiel N.A."/>
            <person name="Kaul S."/>
            <person name="White O."/>
            <person name="Alonso J."/>
            <person name="Altafi H."/>
            <person name="Araujo R."/>
            <person name="Bowman C.L."/>
            <person name="Brooks S.Y."/>
            <person name="Buehler E."/>
            <person name="Chan A."/>
            <person name="Chao Q."/>
            <person name="Chen H."/>
            <person name="Cheuk R.F."/>
            <person name="Chin C.W."/>
            <person name="Chung M.K."/>
            <person name="Conn L."/>
            <person name="Conway A.B."/>
            <person name="Conway A.R."/>
            <person name="Creasy T.H."/>
            <person name="Dewar K."/>
            <person name="Dunn P."/>
            <person name="Etgu P."/>
            <person name="Feldblyum T.V."/>
            <person name="Feng J.-D."/>
            <person name="Fong B."/>
            <person name="Fujii C.Y."/>
            <person name="Gill J.E."/>
            <person name="Goldsmith A.D."/>
            <person name="Haas B."/>
            <person name="Hansen N.F."/>
            <person name="Hughes B."/>
            <person name="Huizar L."/>
            <person name="Hunter J.L."/>
            <person name="Jenkins J."/>
            <person name="Johnson-Hopson C."/>
            <person name="Khan S."/>
            <person name="Khaykin E."/>
            <person name="Kim C.J."/>
            <person name="Koo H.L."/>
            <person name="Kremenetskaia I."/>
            <person name="Kurtz D.B."/>
            <person name="Kwan A."/>
            <person name="Lam B."/>
            <person name="Langin-Hooper S."/>
            <person name="Lee A."/>
            <person name="Lee J.M."/>
            <person name="Lenz C.A."/>
            <person name="Li J.H."/>
            <person name="Li Y.-P."/>
            <person name="Lin X."/>
            <person name="Liu S.X."/>
            <person name="Liu Z.A."/>
            <person name="Luros J.S."/>
            <person name="Maiti R."/>
            <person name="Marziali A."/>
            <person name="Militscher J."/>
            <person name="Miranda M."/>
            <person name="Nguyen M."/>
            <person name="Nierman W.C."/>
            <person name="Osborne B.I."/>
            <person name="Pai G."/>
            <person name="Peterson J."/>
            <person name="Pham P.K."/>
            <person name="Rizzo M."/>
            <person name="Rooney T."/>
            <person name="Rowley D."/>
            <person name="Sakano H."/>
            <person name="Salzberg S.L."/>
            <person name="Schwartz J.R."/>
            <person name="Shinn P."/>
            <person name="Southwick A.M."/>
            <person name="Sun H."/>
            <person name="Tallon L.J."/>
            <person name="Tambunga G."/>
            <person name="Toriumi M.J."/>
            <person name="Town C.D."/>
            <person name="Utterback T."/>
            <person name="Van Aken S."/>
            <person name="Vaysberg M."/>
            <person name="Vysotskaia V.S."/>
            <person name="Walker M."/>
            <person name="Wu D."/>
            <person name="Yu G."/>
            <person name="Fraser C.M."/>
            <person name="Venter J.C."/>
            <person name="Davis R.W."/>
        </authorList>
    </citation>
    <scope>NUCLEOTIDE SEQUENCE [LARGE SCALE GENOMIC DNA]</scope>
    <source>
        <strain>cv. Columbia</strain>
    </source>
</reference>
<reference key="2">
    <citation type="journal article" date="2017" name="Plant J.">
        <title>Araport11: a complete reannotation of the Arabidopsis thaliana reference genome.</title>
        <authorList>
            <person name="Cheng C.Y."/>
            <person name="Krishnakumar V."/>
            <person name="Chan A.P."/>
            <person name="Thibaud-Nissen F."/>
            <person name="Schobel S."/>
            <person name="Town C.D."/>
        </authorList>
    </citation>
    <scope>GENOME REANNOTATION</scope>
    <source>
        <strain>cv. Columbia</strain>
    </source>
</reference>
<reference key="3">
    <citation type="journal article" date="2003" name="Science">
        <title>Empirical analysis of transcriptional activity in the Arabidopsis genome.</title>
        <authorList>
            <person name="Yamada K."/>
            <person name="Lim J."/>
            <person name="Dale J.M."/>
            <person name="Chen H."/>
            <person name="Shinn P."/>
            <person name="Palm C.J."/>
            <person name="Southwick A.M."/>
            <person name="Wu H.C."/>
            <person name="Kim C.J."/>
            <person name="Nguyen M."/>
            <person name="Pham P.K."/>
            <person name="Cheuk R.F."/>
            <person name="Karlin-Newmann G."/>
            <person name="Liu S.X."/>
            <person name="Lam B."/>
            <person name="Sakano H."/>
            <person name="Wu T."/>
            <person name="Yu G."/>
            <person name="Miranda M."/>
            <person name="Quach H.L."/>
            <person name="Tripp M."/>
            <person name="Chang C.H."/>
            <person name="Lee J.M."/>
            <person name="Toriumi M.J."/>
            <person name="Chan M.M."/>
            <person name="Tang C.C."/>
            <person name="Onodera C.S."/>
            <person name="Deng J.M."/>
            <person name="Akiyama K."/>
            <person name="Ansari Y."/>
            <person name="Arakawa T."/>
            <person name="Banh J."/>
            <person name="Banno F."/>
            <person name="Bowser L."/>
            <person name="Brooks S.Y."/>
            <person name="Carninci P."/>
            <person name="Chao Q."/>
            <person name="Choy N."/>
            <person name="Enju A."/>
            <person name="Goldsmith A.D."/>
            <person name="Gurjal M."/>
            <person name="Hansen N.F."/>
            <person name="Hayashizaki Y."/>
            <person name="Johnson-Hopson C."/>
            <person name="Hsuan V.W."/>
            <person name="Iida K."/>
            <person name="Karnes M."/>
            <person name="Khan S."/>
            <person name="Koesema E."/>
            <person name="Ishida J."/>
            <person name="Jiang P.X."/>
            <person name="Jones T."/>
            <person name="Kawai J."/>
            <person name="Kamiya A."/>
            <person name="Meyers C."/>
            <person name="Nakajima M."/>
            <person name="Narusaka M."/>
            <person name="Seki M."/>
            <person name="Sakurai T."/>
            <person name="Satou M."/>
            <person name="Tamse R."/>
            <person name="Vaysberg M."/>
            <person name="Wallender E.K."/>
            <person name="Wong C."/>
            <person name="Yamamura Y."/>
            <person name="Yuan S."/>
            <person name="Shinozaki K."/>
            <person name="Davis R.W."/>
            <person name="Theologis A."/>
            <person name="Ecker J.R."/>
        </authorList>
    </citation>
    <scope>NUCLEOTIDE SEQUENCE [LARGE SCALE MRNA]</scope>
    <source>
        <strain>cv. Columbia</strain>
    </source>
</reference>
<reference key="4">
    <citation type="submission" date="2002-03" db="EMBL/GenBank/DDBJ databases">
        <title>Full-length cDNA from Arabidopsis thaliana.</title>
        <authorList>
            <person name="Brover V.V."/>
            <person name="Troukhan M.E."/>
            <person name="Alexandrov N.A."/>
            <person name="Lu Y.-P."/>
            <person name="Flavell R.B."/>
            <person name="Feldmann K.A."/>
        </authorList>
    </citation>
    <scope>NUCLEOTIDE SEQUENCE [LARGE SCALE MRNA]</scope>
</reference>
<reference key="5">
    <citation type="journal article" date="2006" name="Plant Physiol.">
        <title>Protein profiling of plastoglobules in chloroplasts and chromoplasts. A surprising site for differential accumulation of metabolic enzymes.</title>
        <authorList>
            <person name="Ytterberg A.J."/>
            <person name="Peltier J.-B."/>
            <person name="van Wijk K.J."/>
        </authorList>
    </citation>
    <scope>IDENTIFICATION BY MASS SPECTROMETRY</scope>
    <scope>SUBCELLULAR LOCATION [LARGE SCALE ANALYSIS]</scope>
    <source>
        <strain>cv. Columbia</strain>
    </source>
</reference>
<reference key="6">
    <citation type="journal article" date="2012" name="Plant Physiol.">
        <title>The functional network of the Arabidopsis plastoglobule proteome based on quantitative proteomics and genome-wide coexpression analysis.</title>
        <authorList>
            <person name="Lundquist P.K."/>
            <person name="Poliakov A."/>
            <person name="Bhuiyan N.H."/>
            <person name="Zybailov B."/>
            <person name="Sun Q."/>
            <person name="van Wijk K.J."/>
        </authorList>
    </citation>
    <scope>IDENTIFICATION BY MASS SPECTROMETRY</scope>
    <scope>SUBCELLULAR LOCATION [LARGE SCALE ANALYSIS]</scope>
    <source>
        <strain>cv. Columbia</strain>
    </source>
</reference>
<accession>Q8LBV4</accession>
<accession>Q9C9R8</accession>
<dbReference type="EC" id="2.1.1.-"/>
<dbReference type="EMBL" id="AC012680">
    <property type="protein sequence ID" value="AAG52104.1"/>
    <property type="status" value="ALT_SEQ"/>
    <property type="molecule type" value="Genomic_DNA"/>
</dbReference>
<dbReference type="EMBL" id="CP002684">
    <property type="protein sequence ID" value="AEE36071.1"/>
    <property type="molecule type" value="Genomic_DNA"/>
</dbReference>
<dbReference type="EMBL" id="BT004985">
    <property type="protein sequence ID" value="AAO50518.1"/>
    <property type="molecule type" value="mRNA"/>
</dbReference>
<dbReference type="EMBL" id="BT004126">
    <property type="protein sequence ID" value="AAO42148.1"/>
    <property type="molecule type" value="mRNA"/>
</dbReference>
<dbReference type="EMBL" id="AY086976">
    <property type="protein sequence ID" value="AAM64539.1"/>
    <property type="molecule type" value="mRNA"/>
</dbReference>
<dbReference type="PIR" id="F96810">
    <property type="entry name" value="F96810"/>
</dbReference>
<dbReference type="RefSeq" id="NP_565170.1">
    <property type="nucleotide sequence ID" value="NM_106464.4"/>
</dbReference>
<dbReference type="SMR" id="Q8LBV4"/>
<dbReference type="BioGRID" id="29369">
    <property type="interactions" value="2"/>
</dbReference>
<dbReference type="FunCoup" id="Q8LBV4">
    <property type="interactions" value="459"/>
</dbReference>
<dbReference type="IntAct" id="Q8LBV4">
    <property type="interactions" value="2"/>
</dbReference>
<dbReference type="STRING" id="3702.Q8LBV4"/>
<dbReference type="PaxDb" id="3702-AT1G78140.1"/>
<dbReference type="ProteomicsDB" id="232465"/>
<dbReference type="EnsemblPlants" id="AT1G78140.1">
    <property type="protein sequence ID" value="AT1G78140.1"/>
    <property type="gene ID" value="AT1G78140"/>
</dbReference>
<dbReference type="GeneID" id="844150"/>
<dbReference type="Gramene" id="AT1G78140.1">
    <property type="protein sequence ID" value="AT1G78140.1"/>
    <property type="gene ID" value="AT1G78140"/>
</dbReference>
<dbReference type="KEGG" id="ath:AT1G78140"/>
<dbReference type="Araport" id="AT1G78140"/>
<dbReference type="TAIR" id="AT1G78140"/>
<dbReference type="eggNOG" id="ENOG502QUCH">
    <property type="taxonomic scope" value="Eukaryota"/>
</dbReference>
<dbReference type="HOGENOM" id="CLU_047070_0_0_1"/>
<dbReference type="InParanoid" id="Q8LBV4"/>
<dbReference type="OMA" id="GNQTHID"/>
<dbReference type="PhylomeDB" id="Q8LBV4"/>
<dbReference type="PRO" id="PR:Q8LBV4"/>
<dbReference type="Proteomes" id="UP000006548">
    <property type="component" value="Chromosome 1"/>
</dbReference>
<dbReference type="ExpressionAtlas" id="Q8LBV4">
    <property type="expression patterns" value="baseline and differential"/>
</dbReference>
<dbReference type="GO" id="GO:0009507">
    <property type="term" value="C:chloroplast"/>
    <property type="evidence" value="ECO:0007005"/>
    <property type="project" value="TAIR"/>
</dbReference>
<dbReference type="GO" id="GO:0005739">
    <property type="term" value="C:mitochondrion"/>
    <property type="evidence" value="ECO:0007005"/>
    <property type="project" value="TAIR"/>
</dbReference>
<dbReference type="GO" id="GO:0010287">
    <property type="term" value="C:plastoglobule"/>
    <property type="evidence" value="ECO:0007005"/>
    <property type="project" value="TAIR"/>
</dbReference>
<dbReference type="GO" id="GO:0008757">
    <property type="term" value="F:S-adenosylmethionine-dependent methyltransferase activity"/>
    <property type="evidence" value="ECO:0007669"/>
    <property type="project" value="InterPro"/>
</dbReference>
<dbReference type="GO" id="GO:0009058">
    <property type="term" value="P:biosynthetic process"/>
    <property type="evidence" value="ECO:0007669"/>
    <property type="project" value="UniProtKB-ARBA"/>
</dbReference>
<dbReference type="GO" id="GO:0032259">
    <property type="term" value="P:methylation"/>
    <property type="evidence" value="ECO:0007669"/>
    <property type="project" value="UniProtKB-KW"/>
</dbReference>
<dbReference type="CDD" id="cd02440">
    <property type="entry name" value="AdoMet_MTases"/>
    <property type="match status" value="1"/>
</dbReference>
<dbReference type="FunFam" id="3.40.50.150:FF:000144">
    <property type="entry name" value="Putative methyltransferase, chloroplastic"/>
    <property type="match status" value="1"/>
</dbReference>
<dbReference type="Gene3D" id="3.40.50.150">
    <property type="entry name" value="Vaccinia Virus protein VP39"/>
    <property type="match status" value="1"/>
</dbReference>
<dbReference type="InterPro" id="IPR013216">
    <property type="entry name" value="Methyltransf_11"/>
</dbReference>
<dbReference type="InterPro" id="IPR029063">
    <property type="entry name" value="SAM-dependent_MTases_sf"/>
</dbReference>
<dbReference type="PANTHER" id="PTHR43591">
    <property type="entry name" value="METHYLTRANSFERASE"/>
    <property type="match status" value="1"/>
</dbReference>
<dbReference type="PANTHER" id="PTHR43591:SF46">
    <property type="entry name" value="OS08G0411200 PROTEIN"/>
    <property type="match status" value="1"/>
</dbReference>
<dbReference type="Pfam" id="PF08241">
    <property type="entry name" value="Methyltransf_11"/>
    <property type="match status" value="1"/>
</dbReference>
<dbReference type="SUPFAM" id="SSF53335">
    <property type="entry name" value="S-adenosyl-L-methionine-dependent methyltransferases"/>
    <property type="match status" value="1"/>
</dbReference>
<name>Y1814_ARATH</name>
<keyword id="KW-0150">Chloroplast</keyword>
<keyword id="KW-0489">Methyltransferase</keyword>
<keyword id="KW-0934">Plastid</keyword>
<keyword id="KW-1185">Reference proteome</keyword>
<keyword id="KW-0808">Transferase</keyword>
<keyword id="KW-0809">Transit peptide</keyword>